<sequence>MTTTDRIAAAFARVSEAGRAAALIPYIAAGDPSPQATVPLMHALVRAGADLVELGVPFSDPMADGPVVQRAAERAIAQGVGLRRVLELVADFRRDDSVTPVVLMGYANPIERMGQRAFAQAAQAAGVDGVLVVDYPPEEVDEFAVMLAEAGVAPIFLLAPTSTEARIEAIGRVARGYVYYVSLKGVTGAGSLDTDDVARKLALIRRHVHIPVGVGFGIRDAASAQRIAAHADAVVIGSKLIETMEQAGAQAGADQKNEAAIAAAQQWLHTIRLALDDVKRENAPA</sequence>
<protein>
    <recommendedName>
        <fullName evidence="1">Tryptophan synthase alpha chain</fullName>
        <ecNumber evidence="1">4.2.1.20</ecNumber>
    </recommendedName>
</protein>
<keyword id="KW-0028">Amino-acid biosynthesis</keyword>
<keyword id="KW-0057">Aromatic amino acid biosynthesis</keyword>
<keyword id="KW-0456">Lyase</keyword>
<keyword id="KW-1185">Reference proteome</keyword>
<keyword id="KW-0822">Tryptophan biosynthesis</keyword>
<organism>
    <name type="scientific">Bordetella pertussis (strain Tohama I / ATCC BAA-589 / NCTC 13251)</name>
    <dbReference type="NCBI Taxonomy" id="257313"/>
    <lineage>
        <taxon>Bacteria</taxon>
        <taxon>Pseudomonadati</taxon>
        <taxon>Pseudomonadota</taxon>
        <taxon>Betaproteobacteria</taxon>
        <taxon>Burkholderiales</taxon>
        <taxon>Alcaligenaceae</taxon>
        <taxon>Bordetella</taxon>
    </lineage>
</organism>
<reference key="1">
    <citation type="journal article" date="2003" name="Nat. Genet.">
        <title>Comparative analysis of the genome sequences of Bordetella pertussis, Bordetella parapertussis and Bordetella bronchiseptica.</title>
        <authorList>
            <person name="Parkhill J."/>
            <person name="Sebaihia M."/>
            <person name="Preston A."/>
            <person name="Murphy L.D."/>
            <person name="Thomson N.R."/>
            <person name="Harris D.E."/>
            <person name="Holden M.T.G."/>
            <person name="Churcher C.M."/>
            <person name="Bentley S.D."/>
            <person name="Mungall K.L."/>
            <person name="Cerdeno-Tarraga A.-M."/>
            <person name="Temple L."/>
            <person name="James K.D."/>
            <person name="Harris B."/>
            <person name="Quail M.A."/>
            <person name="Achtman M."/>
            <person name="Atkin R."/>
            <person name="Baker S."/>
            <person name="Basham D."/>
            <person name="Bason N."/>
            <person name="Cherevach I."/>
            <person name="Chillingworth T."/>
            <person name="Collins M."/>
            <person name="Cronin A."/>
            <person name="Davis P."/>
            <person name="Doggett J."/>
            <person name="Feltwell T."/>
            <person name="Goble A."/>
            <person name="Hamlin N."/>
            <person name="Hauser H."/>
            <person name="Holroyd S."/>
            <person name="Jagels K."/>
            <person name="Leather S."/>
            <person name="Moule S."/>
            <person name="Norberczak H."/>
            <person name="O'Neil S."/>
            <person name="Ormond D."/>
            <person name="Price C."/>
            <person name="Rabbinowitsch E."/>
            <person name="Rutter S."/>
            <person name="Sanders M."/>
            <person name="Saunders D."/>
            <person name="Seeger K."/>
            <person name="Sharp S."/>
            <person name="Simmonds M."/>
            <person name="Skelton J."/>
            <person name="Squares R."/>
            <person name="Squares S."/>
            <person name="Stevens K."/>
            <person name="Unwin L."/>
            <person name="Whitehead S."/>
            <person name="Barrell B.G."/>
            <person name="Maskell D.J."/>
        </authorList>
    </citation>
    <scope>NUCLEOTIDE SEQUENCE [LARGE SCALE GENOMIC DNA]</scope>
    <source>
        <strain>Tohama I / ATCC BAA-589 / NCTC 13251</strain>
    </source>
</reference>
<gene>
    <name evidence="1" type="primary">trpA</name>
    <name type="ordered locus">BP3590</name>
</gene>
<feature type="chain" id="PRO_0000098749" description="Tryptophan synthase alpha chain">
    <location>
        <begin position="1"/>
        <end position="285"/>
    </location>
</feature>
<feature type="active site" description="Proton acceptor" evidence="1">
    <location>
        <position position="53"/>
    </location>
</feature>
<feature type="active site" description="Proton acceptor" evidence="1">
    <location>
        <position position="64"/>
    </location>
</feature>
<proteinExistence type="inferred from homology"/>
<name>TRPA_BORPE</name>
<accession>Q7VTF0</accession>
<comment type="function">
    <text evidence="1">The alpha subunit is responsible for the aldol cleavage of indoleglycerol phosphate to indole and glyceraldehyde 3-phosphate.</text>
</comment>
<comment type="catalytic activity">
    <reaction evidence="1">
        <text>(1S,2R)-1-C-(indol-3-yl)glycerol 3-phosphate + L-serine = D-glyceraldehyde 3-phosphate + L-tryptophan + H2O</text>
        <dbReference type="Rhea" id="RHEA:10532"/>
        <dbReference type="ChEBI" id="CHEBI:15377"/>
        <dbReference type="ChEBI" id="CHEBI:33384"/>
        <dbReference type="ChEBI" id="CHEBI:57912"/>
        <dbReference type="ChEBI" id="CHEBI:58866"/>
        <dbReference type="ChEBI" id="CHEBI:59776"/>
        <dbReference type="EC" id="4.2.1.20"/>
    </reaction>
</comment>
<comment type="pathway">
    <text evidence="1">Amino-acid biosynthesis; L-tryptophan biosynthesis; L-tryptophan from chorismate: step 5/5.</text>
</comment>
<comment type="subunit">
    <text evidence="1">Tetramer of two alpha and two beta chains.</text>
</comment>
<comment type="similarity">
    <text evidence="1">Belongs to the TrpA family.</text>
</comment>
<evidence type="ECO:0000255" key="1">
    <source>
        <dbReference type="HAMAP-Rule" id="MF_00131"/>
    </source>
</evidence>
<dbReference type="EC" id="4.2.1.20" evidence="1"/>
<dbReference type="EMBL" id="BX640421">
    <property type="protein sequence ID" value="CAE43849.1"/>
    <property type="molecule type" value="Genomic_DNA"/>
</dbReference>
<dbReference type="RefSeq" id="NP_882103.1">
    <property type="nucleotide sequence ID" value="NC_002929.2"/>
</dbReference>
<dbReference type="RefSeq" id="WP_003821334.1">
    <property type="nucleotide sequence ID" value="NZ_CP039022.1"/>
</dbReference>
<dbReference type="SMR" id="Q7VTF0"/>
<dbReference type="STRING" id="257313.BP3590"/>
<dbReference type="PaxDb" id="257313-BP3590"/>
<dbReference type="GeneID" id="69600412"/>
<dbReference type="KEGG" id="bpe:BP3590"/>
<dbReference type="PATRIC" id="fig|257313.5.peg.3884"/>
<dbReference type="eggNOG" id="COG0159">
    <property type="taxonomic scope" value="Bacteria"/>
</dbReference>
<dbReference type="HOGENOM" id="CLU_016734_0_0_4"/>
<dbReference type="UniPathway" id="UPA00035">
    <property type="reaction ID" value="UER00044"/>
</dbReference>
<dbReference type="Proteomes" id="UP000002676">
    <property type="component" value="Chromosome"/>
</dbReference>
<dbReference type="GO" id="GO:0005829">
    <property type="term" value="C:cytosol"/>
    <property type="evidence" value="ECO:0007669"/>
    <property type="project" value="TreeGrafter"/>
</dbReference>
<dbReference type="GO" id="GO:0004834">
    <property type="term" value="F:tryptophan synthase activity"/>
    <property type="evidence" value="ECO:0007669"/>
    <property type="project" value="UniProtKB-UniRule"/>
</dbReference>
<dbReference type="CDD" id="cd04724">
    <property type="entry name" value="Tryptophan_synthase_alpha"/>
    <property type="match status" value="1"/>
</dbReference>
<dbReference type="FunFam" id="3.20.20.70:FF:000037">
    <property type="entry name" value="Tryptophan synthase alpha chain"/>
    <property type="match status" value="1"/>
</dbReference>
<dbReference type="Gene3D" id="3.20.20.70">
    <property type="entry name" value="Aldolase class I"/>
    <property type="match status" value="1"/>
</dbReference>
<dbReference type="HAMAP" id="MF_00131">
    <property type="entry name" value="Trp_synth_alpha"/>
    <property type="match status" value="1"/>
</dbReference>
<dbReference type="InterPro" id="IPR013785">
    <property type="entry name" value="Aldolase_TIM"/>
</dbReference>
<dbReference type="InterPro" id="IPR011060">
    <property type="entry name" value="RibuloseP-bd_barrel"/>
</dbReference>
<dbReference type="InterPro" id="IPR018204">
    <property type="entry name" value="Trp_synthase_alpha_AS"/>
</dbReference>
<dbReference type="InterPro" id="IPR002028">
    <property type="entry name" value="Trp_synthase_suA"/>
</dbReference>
<dbReference type="NCBIfam" id="TIGR00262">
    <property type="entry name" value="trpA"/>
    <property type="match status" value="1"/>
</dbReference>
<dbReference type="PANTHER" id="PTHR43406:SF1">
    <property type="entry name" value="TRYPTOPHAN SYNTHASE ALPHA CHAIN, CHLOROPLASTIC"/>
    <property type="match status" value="1"/>
</dbReference>
<dbReference type="PANTHER" id="PTHR43406">
    <property type="entry name" value="TRYPTOPHAN SYNTHASE, ALPHA CHAIN"/>
    <property type="match status" value="1"/>
</dbReference>
<dbReference type="Pfam" id="PF00290">
    <property type="entry name" value="Trp_syntA"/>
    <property type="match status" value="1"/>
</dbReference>
<dbReference type="SUPFAM" id="SSF51366">
    <property type="entry name" value="Ribulose-phoshate binding barrel"/>
    <property type="match status" value="1"/>
</dbReference>
<dbReference type="PROSITE" id="PS00167">
    <property type="entry name" value="TRP_SYNTHASE_ALPHA"/>
    <property type="match status" value="1"/>
</dbReference>